<accession>C1D070</accession>
<comment type="function">
    <text evidence="1">Catalyzes the reductive methylation of 2'-deoxyuridine-5'-monophosphate (dUMP) to 2'-deoxythymidine-5'-monophosphate (dTMP) while utilizing 5,10-methylenetetrahydrofolate (mTHF) as the methyl donor and reductant in the reaction, yielding dihydrofolate (DHF) as a by-product. This enzymatic reaction provides an intracellular de novo source of dTMP, an essential precursor for DNA biosynthesis.</text>
</comment>
<comment type="catalytic activity">
    <reaction evidence="1">
        <text>dUMP + (6R)-5,10-methylene-5,6,7,8-tetrahydrofolate = 7,8-dihydrofolate + dTMP</text>
        <dbReference type="Rhea" id="RHEA:12104"/>
        <dbReference type="ChEBI" id="CHEBI:15636"/>
        <dbReference type="ChEBI" id="CHEBI:57451"/>
        <dbReference type="ChEBI" id="CHEBI:63528"/>
        <dbReference type="ChEBI" id="CHEBI:246422"/>
        <dbReference type="EC" id="2.1.1.45"/>
    </reaction>
</comment>
<comment type="pathway">
    <text evidence="1">Pyrimidine metabolism; dTTP biosynthesis.</text>
</comment>
<comment type="subunit">
    <text evidence="1">Homodimer.</text>
</comment>
<comment type="subcellular location">
    <subcellularLocation>
        <location evidence="1">Cytoplasm</location>
    </subcellularLocation>
</comment>
<comment type="similarity">
    <text evidence="1">Belongs to the thymidylate synthase family. Bacterial-type ThyA subfamily.</text>
</comment>
<sequence length="264" mass="30291">MQQYLDFMRHVLEHGTEKTDRTGTGTLSVFGHQMRFDLQEGFPLVTTKRTHLKSIIHELLWFLQGSSNVAYLREHGVTIWDEWADPDGELGPVYGVQWRSWPTPDGRHIDQIAQVVEQIRRTPDSRRLIVSAWNVGEIEQMALPPCHAFFQFYVADGRLSCQLYQRSADIFLGVPFNIASYALLTLMVAQVTGLKPGEFIWTGGDCHLYTNHLEQARKQLTREPRTLPVMRLNPDVRELDGFRFEDFTLEGYDPHPGIKAPVAV</sequence>
<proteinExistence type="inferred from homology"/>
<protein>
    <recommendedName>
        <fullName evidence="1">Thymidylate synthase</fullName>
        <shortName evidence="1">TS</shortName>
        <shortName evidence="1">TSase</shortName>
        <ecNumber evidence="1">2.1.1.45</ecNumber>
    </recommendedName>
</protein>
<gene>
    <name evidence="1" type="primary">thyA</name>
    <name type="ordered locus">Deide_23040</name>
</gene>
<feature type="chain" id="PRO_1000201716" description="Thymidylate synthase">
    <location>
        <begin position="1"/>
        <end position="264"/>
    </location>
</feature>
<feature type="active site" description="Nucleophile" evidence="1">
    <location>
        <position position="146"/>
    </location>
</feature>
<feature type="binding site" description="in other chain" evidence="1">
    <location>
        <position position="21"/>
    </location>
    <ligand>
        <name>dUMP</name>
        <dbReference type="ChEBI" id="CHEBI:246422"/>
        <note>ligand shared between dimeric partners</note>
    </ligand>
</feature>
<feature type="binding site" evidence="1">
    <location>
        <position position="51"/>
    </location>
    <ligand>
        <name>(6R)-5,10-methylene-5,6,7,8-tetrahydrofolate</name>
        <dbReference type="ChEBI" id="CHEBI:15636"/>
    </ligand>
</feature>
<feature type="binding site" evidence="1">
    <location>
        <begin position="126"/>
        <end position="127"/>
    </location>
    <ligand>
        <name>dUMP</name>
        <dbReference type="ChEBI" id="CHEBI:246422"/>
        <note>ligand shared between dimeric partners</note>
    </ligand>
</feature>
<feature type="binding site" description="in other chain" evidence="1">
    <location>
        <begin position="166"/>
        <end position="169"/>
    </location>
    <ligand>
        <name>dUMP</name>
        <dbReference type="ChEBI" id="CHEBI:246422"/>
        <note>ligand shared between dimeric partners</note>
    </ligand>
</feature>
<feature type="binding site" evidence="1">
    <location>
        <position position="169"/>
    </location>
    <ligand>
        <name>(6R)-5,10-methylene-5,6,7,8-tetrahydrofolate</name>
        <dbReference type="ChEBI" id="CHEBI:15636"/>
    </ligand>
</feature>
<feature type="binding site" description="in other chain" evidence="1">
    <location>
        <position position="177"/>
    </location>
    <ligand>
        <name>dUMP</name>
        <dbReference type="ChEBI" id="CHEBI:246422"/>
        <note>ligand shared between dimeric partners</note>
    </ligand>
</feature>
<feature type="binding site" description="in other chain" evidence="1">
    <location>
        <begin position="207"/>
        <end position="209"/>
    </location>
    <ligand>
        <name>dUMP</name>
        <dbReference type="ChEBI" id="CHEBI:246422"/>
        <note>ligand shared between dimeric partners</note>
    </ligand>
</feature>
<feature type="binding site" evidence="1">
    <location>
        <position position="263"/>
    </location>
    <ligand>
        <name>(6R)-5,10-methylene-5,6,7,8-tetrahydrofolate</name>
        <dbReference type="ChEBI" id="CHEBI:15636"/>
    </ligand>
</feature>
<dbReference type="EC" id="2.1.1.45" evidence="1"/>
<dbReference type="EMBL" id="CP001114">
    <property type="protein sequence ID" value="ACO47339.1"/>
    <property type="molecule type" value="Genomic_DNA"/>
</dbReference>
<dbReference type="RefSeq" id="WP_012694460.1">
    <property type="nucleotide sequence ID" value="NC_012526.1"/>
</dbReference>
<dbReference type="SMR" id="C1D070"/>
<dbReference type="STRING" id="546414.Deide_23040"/>
<dbReference type="PaxDb" id="546414-Deide_23040"/>
<dbReference type="KEGG" id="ddr:Deide_23040"/>
<dbReference type="eggNOG" id="COG0207">
    <property type="taxonomic scope" value="Bacteria"/>
</dbReference>
<dbReference type="HOGENOM" id="CLU_021669_0_0_0"/>
<dbReference type="OrthoDB" id="9774633at2"/>
<dbReference type="UniPathway" id="UPA00575"/>
<dbReference type="Proteomes" id="UP000002208">
    <property type="component" value="Chromosome"/>
</dbReference>
<dbReference type="GO" id="GO:0005829">
    <property type="term" value="C:cytosol"/>
    <property type="evidence" value="ECO:0007669"/>
    <property type="project" value="TreeGrafter"/>
</dbReference>
<dbReference type="GO" id="GO:0004799">
    <property type="term" value="F:thymidylate synthase activity"/>
    <property type="evidence" value="ECO:0007669"/>
    <property type="project" value="UniProtKB-UniRule"/>
</dbReference>
<dbReference type="GO" id="GO:0006231">
    <property type="term" value="P:dTMP biosynthetic process"/>
    <property type="evidence" value="ECO:0007669"/>
    <property type="project" value="UniProtKB-UniRule"/>
</dbReference>
<dbReference type="GO" id="GO:0006235">
    <property type="term" value="P:dTTP biosynthetic process"/>
    <property type="evidence" value="ECO:0007669"/>
    <property type="project" value="UniProtKB-UniRule"/>
</dbReference>
<dbReference type="GO" id="GO:0032259">
    <property type="term" value="P:methylation"/>
    <property type="evidence" value="ECO:0007669"/>
    <property type="project" value="UniProtKB-KW"/>
</dbReference>
<dbReference type="CDD" id="cd00351">
    <property type="entry name" value="TS_Pyrimidine_HMase"/>
    <property type="match status" value="1"/>
</dbReference>
<dbReference type="FunFam" id="3.30.572.10:FF:000001">
    <property type="entry name" value="Thymidylate synthase"/>
    <property type="match status" value="1"/>
</dbReference>
<dbReference type="Gene3D" id="3.30.572.10">
    <property type="entry name" value="Thymidylate synthase/dCMP hydroxymethylase domain"/>
    <property type="match status" value="1"/>
</dbReference>
<dbReference type="HAMAP" id="MF_00008">
    <property type="entry name" value="Thymidy_synth_bact"/>
    <property type="match status" value="1"/>
</dbReference>
<dbReference type="InterPro" id="IPR045097">
    <property type="entry name" value="Thymidate_synth/dCMP_Mease"/>
</dbReference>
<dbReference type="InterPro" id="IPR023451">
    <property type="entry name" value="Thymidate_synth/dCMP_Mease_dom"/>
</dbReference>
<dbReference type="InterPro" id="IPR036926">
    <property type="entry name" value="Thymidate_synth/dCMP_Mease_sf"/>
</dbReference>
<dbReference type="InterPro" id="IPR000398">
    <property type="entry name" value="Thymidylate_synthase"/>
</dbReference>
<dbReference type="InterPro" id="IPR020940">
    <property type="entry name" value="Thymidylate_synthase_AS"/>
</dbReference>
<dbReference type="NCBIfam" id="NF002497">
    <property type="entry name" value="PRK01827.1-3"/>
    <property type="match status" value="1"/>
</dbReference>
<dbReference type="NCBIfam" id="NF002499">
    <property type="entry name" value="PRK01827.1-5"/>
    <property type="match status" value="1"/>
</dbReference>
<dbReference type="NCBIfam" id="TIGR03284">
    <property type="entry name" value="thym_sym"/>
    <property type="match status" value="2"/>
</dbReference>
<dbReference type="PANTHER" id="PTHR11548:SF9">
    <property type="entry name" value="THYMIDYLATE SYNTHASE"/>
    <property type="match status" value="1"/>
</dbReference>
<dbReference type="PANTHER" id="PTHR11548">
    <property type="entry name" value="THYMIDYLATE SYNTHASE 1"/>
    <property type="match status" value="1"/>
</dbReference>
<dbReference type="Pfam" id="PF00303">
    <property type="entry name" value="Thymidylat_synt"/>
    <property type="match status" value="1"/>
</dbReference>
<dbReference type="PRINTS" id="PR00108">
    <property type="entry name" value="THYMDSNTHASE"/>
</dbReference>
<dbReference type="SUPFAM" id="SSF55831">
    <property type="entry name" value="Thymidylate synthase/dCMP hydroxymethylase"/>
    <property type="match status" value="1"/>
</dbReference>
<dbReference type="PROSITE" id="PS00091">
    <property type="entry name" value="THYMIDYLATE_SYNTHASE"/>
    <property type="match status" value="1"/>
</dbReference>
<name>TYSY_DEIDV</name>
<evidence type="ECO:0000255" key="1">
    <source>
        <dbReference type="HAMAP-Rule" id="MF_00008"/>
    </source>
</evidence>
<keyword id="KW-0963">Cytoplasm</keyword>
<keyword id="KW-0489">Methyltransferase</keyword>
<keyword id="KW-0545">Nucleotide biosynthesis</keyword>
<keyword id="KW-1185">Reference proteome</keyword>
<keyword id="KW-0808">Transferase</keyword>
<reference key="1">
    <citation type="journal article" date="2009" name="PLoS Genet.">
        <title>Alliance of proteomics and genomics to unravel the specificities of Sahara bacterium Deinococcus deserti.</title>
        <authorList>
            <person name="de Groot A."/>
            <person name="Dulermo R."/>
            <person name="Ortet P."/>
            <person name="Blanchard L."/>
            <person name="Guerin P."/>
            <person name="Fernandez B."/>
            <person name="Vacherie B."/>
            <person name="Dossat C."/>
            <person name="Jolivet E."/>
            <person name="Siguier P."/>
            <person name="Chandler M."/>
            <person name="Barakat M."/>
            <person name="Dedieu A."/>
            <person name="Barbe V."/>
            <person name="Heulin T."/>
            <person name="Sommer S."/>
            <person name="Achouak W."/>
            <person name="Armengaud J."/>
        </authorList>
    </citation>
    <scope>NUCLEOTIDE SEQUENCE [LARGE SCALE GENOMIC DNA]</scope>
    <source>
        <strain>DSM 17065 / CIP 109153 / LMG 22923 / VCD115</strain>
    </source>
</reference>
<organism>
    <name type="scientific">Deinococcus deserti (strain DSM 17065 / CIP 109153 / LMG 22923 / VCD115)</name>
    <dbReference type="NCBI Taxonomy" id="546414"/>
    <lineage>
        <taxon>Bacteria</taxon>
        <taxon>Thermotogati</taxon>
        <taxon>Deinococcota</taxon>
        <taxon>Deinococci</taxon>
        <taxon>Deinococcales</taxon>
        <taxon>Deinococcaceae</taxon>
        <taxon>Deinococcus</taxon>
    </lineage>
</organism>